<protein>
    <recommendedName>
        <fullName evidence="1">Quinolinate synthase</fullName>
        <ecNumber evidence="1">2.5.1.72</ecNumber>
    </recommendedName>
</protein>
<feature type="chain" id="PRO_1000024946" description="Quinolinate synthase">
    <location>
        <begin position="1"/>
        <end position="378"/>
    </location>
</feature>
<feature type="binding site" evidence="1">
    <location>
        <position position="59"/>
    </location>
    <ligand>
        <name>iminosuccinate</name>
        <dbReference type="ChEBI" id="CHEBI:77875"/>
    </ligand>
</feature>
<feature type="binding site" evidence="1">
    <location>
        <position position="80"/>
    </location>
    <ligand>
        <name>iminosuccinate</name>
        <dbReference type="ChEBI" id="CHEBI:77875"/>
    </ligand>
</feature>
<feature type="binding site" evidence="1">
    <location>
        <position position="125"/>
    </location>
    <ligand>
        <name>[4Fe-4S] cluster</name>
        <dbReference type="ChEBI" id="CHEBI:49883"/>
    </ligand>
</feature>
<feature type="binding site" evidence="1">
    <location>
        <begin position="151"/>
        <end position="153"/>
    </location>
    <ligand>
        <name>iminosuccinate</name>
        <dbReference type="ChEBI" id="CHEBI:77875"/>
    </ligand>
</feature>
<feature type="binding site" evidence="1">
    <location>
        <position position="168"/>
    </location>
    <ligand>
        <name>iminosuccinate</name>
        <dbReference type="ChEBI" id="CHEBI:77875"/>
    </ligand>
</feature>
<feature type="binding site" evidence="1">
    <location>
        <position position="212"/>
    </location>
    <ligand>
        <name>[4Fe-4S] cluster</name>
        <dbReference type="ChEBI" id="CHEBI:49883"/>
    </ligand>
</feature>
<feature type="binding site" evidence="1">
    <location>
        <begin position="238"/>
        <end position="240"/>
    </location>
    <ligand>
        <name>iminosuccinate</name>
        <dbReference type="ChEBI" id="CHEBI:77875"/>
    </ligand>
</feature>
<feature type="binding site" evidence="1">
    <location>
        <position position="255"/>
    </location>
    <ligand>
        <name>iminosuccinate</name>
        <dbReference type="ChEBI" id="CHEBI:77875"/>
    </ligand>
</feature>
<feature type="binding site" evidence="1">
    <location>
        <position position="309"/>
    </location>
    <ligand>
        <name>[4Fe-4S] cluster</name>
        <dbReference type="ChEBI" id="CHEBI:49883"/>
    </ligand>
</feature>
<evidence type="ECO:0000255" key="1">
    <source>
        <dbReference type="HAMAP-Rule" id="MF_00567"/>
    </source>
</evidence>
<gene>
    <name evidence="1" type="primary">nadA</name>
    <name type="ordered locus">BMA2236</name>
</gene>
<reference key="1">
    <citation type="journal article" date="2004" name="Proc. Natl. Acad. Sci. U.S.A.">
        <title>Structural flexibility in the Burkholderia mallei genome.</title>
        <authorList>
            <person name="Nierman W.C."/>
            <person name="DeShazer D."/>
            <person name="Kim H.S."/>
            <person name="Tettelin H."/>
            <person name="Nelson K.E."/>
            <person name="Feldblyum T.V."/>
            <person name="Ulrich R.L."/>
            <person name="Ronning C.M."/>
            <person name="Brinkac L.M."/>
            <person name="Daugherty S.C."/>
            <person name="Davidsen T.D."/>
            <person name="DeBoy R.T."/>
            <person name="Dimitrov G."/>
            <person name="Dodson R.J."/>
            <person name="Durkin A.S."/>
            <person name="Gwinn M.L."/>
            <person name="Haft D.H."/>
            <person name="Khouri H.M."/>
            <person name="Kolonay J.F."/>
            <person name="Madupu R."/>
            <person name="Mohammoud Y."/>
            <person name="Nelson W.C."/>
            <person name="Radune D."/>
            <person name="Romero C.M."/>
            <person name="Sarria S."/>
            <person name="Selengut J."/>
            <person name="Shamblin C."/>
            <person name="Sullivan S.A."/>
            <person name="White O."/>
            <person name="Yu Y."/>
            <person name="Zafar N."/>
            <person name="Zhou L."/>
            <person name="Fraser C.M."/>
        </authorList>
    </citation>
    <scope>NUCLEOTIDE SEQUENCE [LARGE SCALE GENOMIC DNA]</scope>
    <source>
        <strain>ATCC 23344</strain>
    </source>
</reference>
<organism>
    <name type="scientific">Burkholderia mallei (strain ATCC 23344)</name>
    <dbReference type="NCBI Taxonomy" id="243160"/>
    <lineage>
        <taxon>Bacteria</taxon>
        <taxon>Pseudomonadati</taxon>
        <taxon>Pseudomonadota</taxon>
        <taxon>Betaproteobacteria</taxon>
        <taxon>Burkholderiales</taxon>
        <taxon>Burkholderiaceae</taxon>
        <taxon>Burkholderia</taxon>
        <taxon>pseudomallei group</taxon>
    </lineage>
</organism>
<proteinExistence type="inferred from homology"/>
<keyword id="KW-0004">4Fe-4S</keyword>
<keyword id="KW-0963">Cytoplasm</keyword>
<keyword id="KW-0408">Iron</keyword>
<keyword id="KW-0411">Iron-sulfur</keyword>
<keyword id="KW-0479">Metal-binding</keyword>
<keyword id="KW-0662">Pyridine nucleotide biosynthesis</keyword>
<keyword id="KW-1185">Reference proteome</keyword>
<keyword id="KW-0808">Transferase</keyword>
<dbReference type="EC" id="2.5.1.72" evidence="1"/>
<dbReference type="EMBL" id="CP000010">
    <property type="protein sequence ID" value="AAU50251.1"/>
    <property type="molecule type" value="Genomic_DNA"/>
</dbReference>
<dbReference type="RefSeq" id="WP_004185886.1">
    <property type="nucleotide sequence ID" value="NC_006348.1"/>
</dbReference>
<dbReference type="RefSeq" id="YP_103800.1">
    <property type="nucleotide sequence ID" value="NC_006348.1"/>
</dbReference>
<dbReference type="SMR" id="Q62HM0"/>
<dbReference type="GeneID" id="93059425"/>
<dbReference type="KEGG" id="bma:BMA2236"/>
<dbReference type="PATRIC" id="fig|243160.12.peg.2300"/>
<dbReference type="eggNOG" id="COG0379">
    <property type="taxonomic scope" value="Bacteria"/>
</dbReference>
<dbReference type="HOGENOM" id="CLU_047382_1_0_4"/>
<dbReference type="UniPathway" id="UPA00253">
    <property type="reaction ID" value="UER00327"/>
</dbReference>
<dbReference type="Proteomes" id="UP000006693">
    <property type="component" value="Chromosome 1"/>
</dbReference>
<dbReference type="GO" id="GO:0005829">
    <property type="term" value="C:cytosol"/>
    <property type="evidence" value="ECO:0007669"/>
    <property type="project" value="TreeGrafter"/>
</dbReference>
<dbReference type="GO" id="GO:0051539">
    <property type="term" value="F:4 iron, 4 sulfur cluster binding"/>
    <property type="evidence" value="ECO:0007669"/>
    <property type="project" value="UniProtKB-KW"/>
</dbReference>
<dbReference type="GO" id="GO:0046872">
    <property type="term" value="F:metal ion binding"/>
    <property type="evidence" value="ECO:0007669"/>
    <property type="project" value="UniProtKB-KW"/>
</dbReference>
<dbReference type="GO" id="GO:0008987">
    <property type="term" value="F:quinolinate synthetase A activity"/>
    <property type="evidence" value="ECO:0007669"/>
    <property type="project" value="UniProtKB-UniRule"/>
</dbReference>
<dbReference type="GO" id="GO:0034628">
    <property type="term" value="P:'de novo' NAD biosynthetic process from L-aspartate"/>
    <property type="evidence" value="ECO:0007669"/>
    <property type="project" value="TreeGrafter"/>
</dbReference>
<dbReference type="FunFam" id="3.40.50.10800:FF:000001">
    <property type="entry name" value="Quinolinate synthase A"/>
    <property type="match status" value="1"/>
</dbReference>
<dbReference type="FunFam" id="3.40.50.10800:FF:000003">
    <property type="entry name" value="Quinolinate synthase A"/>
    <property type="match status" value="1"/>
</dbReference>
<dbReference type="Gene3D" id="3.40.50.10800">
    <property type="entry name" value="NadA-like"/>
    <property type="match status" value="3"/>
</dbReference>
<dbReference type="HAMAP" id="MF_00567">
    <property type="entry name" value="NadA_type1"/>
    <property type="match status" value="1"/>
</dbReference>
<dbReference type="InterPro" id="IPR003473">
    <property type="entry name" value="NadA"/>
</dbReference>
<dbReference type="InterPro" id="IPR036094">
    <property type="entry name" value="NadA_sf"/>
</dbReference>
<dbReference type="InterPro" id="IPR023513">
    <property type="entry name" value="Quinolinate_synth_A_type1"/>
</dbReference>
<dbReference type="NCBIfam" id="TIGR00550">
    <property type="entry name" value="nadA"/>
    <property type="match status" value="1"/>
</dbReference>
<dbReference type="NCBIfam" id="NF006877">
    <property type="entry name" value="PRK09375.1-1"/>
    <property type="match status" value="1"/>
</dbReference>
<dbReference type="NCBIfam" id="NF006878">
    <property type="entry name" value="PRK09375.1-2"/>
    <property type="match status" value="1"/>
</dbReference>
<dbReference type="PANTHER" id="PTHR30573:SF0">
    <property type="entry name" value="QUINOLINATE SYNTHASE, CHLOROPLASTIC"/>
    <property type="match status" value="1"/>
</dbReference>
<dbReference type="PANTHER" id="PTHR30573">
    <property type="entry name" value="QUINOLINATE SYNTHETASE A"/>
    <property type="match status" value="1"/>
</dbReference>
<dbReference type="Pfam" id="PF02445">
    <property type="entry name" value="NadA"/>
    <property type="match status" value="1"/>
</dbReference>
<dbReference type="SUPFAM" id="SSF142754">
    <property type="entry name" value="NadA-like"/>
    <property type="match status" value="1"/>
</dbReference>
<accession>Q62HM0</accession>
<name>NADA_BURMA</name>
<sequence length="378" mass="40828">MQSAIKSVEYDRPLAAGAACGVGEAWAKVPDALAPDERDALKARIKALLVREKAVLVAHYYVDADLQALADETGGCVADSLEMARFGRDHDAHTLVVAGVRFMGETAKILSPGKRVLMPDLDATCSLDLGCPVDEFSQFCDAHPERTVVVYANTSAAVKARADWMVTSSIGLEIVADLHARGEKIIWAPDRHLGGYIQKKTGADMLMWQGSCLVHDEFKGIELDLLRHEYPDAKILVHPESPEGVVALADVVGSTTQLIDAAVKLDAQRFIVATDLGILHKMRLAAPGKTFIEAPTAGNSATCKSCAHCPWMAMNALSNLADVLERGHNEIFVEAAIAQRARMPIDRMLDFAARHKQRVQASGDLQRDQALFANVGAA</sequence>
<comment type="function">
    <text evidence="1">Catalyzes the condensation of iminoaspartate with dihydroxyacetone phosphate to form quinolinate.</text>
</comment>
<comment type="catalytic activity">
    <reaction evidence="1">
        <text>iminosuccinate + dihydroxyacetone phosphate = quinolinate + phosphate + 2 H2O + H(+)</text>
        <dbReference type="Rhea" id="RHEA:25888"/>
        <dbReference type="ChEBI" id="CHEBI:15377"/>
        <dbReference type="ChEBI" id="CHEBI:15378"/>
        <dbReference type="ChEBI" id="CHEBI:29959"/>
        <dbReference type="ChEBI" id="CHEBI:43474"/>
        <dbReference type="ChEBI" id="CHEBI:57642"/>
        <dbReference type="ChEBI" id="CHEBI:77875"/>
        <dbReference type="EC" id="2.5.1.72"/>
    </reaction>
    <physiologicalReaction direction="left-to-right" evidence="1">
        <dbReference type="Rhea" id="RHEA:25889"/>
    </physiologicalReaction>
</comment>
<comment type="cofactor">
    <cofactor evidence="1">
        <name>[4Fe-4S] cluster</name>
        <dbReference type="ChEBI" id="CHEBI:49883"/>
    </cofactor>
    <text evidence="1">Binds 1 [4Fe-4S] cluster per subunit.</text>
</comment>
<comment type="pathway">
    <text evidence="1">Cofactor biosynthesis; NAD(+) biosynthesis; quinolinate from iminoaspartate: step 1/1.</text>
</comment>
<comment type="subcellular location">
    <subcellularLocation>
        <location evidence="1">Cytoplasm</location>
    </subcellularLocation>
</comment>
<comment type="similarity">
    <text evidence="1">Belongs to the quinolinate synthase family. Type 1 subfamily.</text>
</comment>